<sequence length="322" mass="35972">MSGRLPFSQSFWEEFLMGREGHLPVLPELSHVSKGVIRILGGNPGSMHLQGTNTYLVGTGRSRILIDTAQGLPAWINRISSFLSTQKIELSYVLLTHWHGDHTGGVPDLIARNSSLANKIYKNQPDSGQSPITHGQIFSVDGATVRAILTPGHSVDHMCFLLEEENALFTGDNVLGHGFSVAQDLGRYMDSLRDMASLGCRIGYPAHGAMIENLPGKLEEYIQHREGRERMMLSALTRHRVRGEGTRDERVKYGLTLNEIVLAVYGRLPQEVIEKALAPSLLQVLWKLTEDRMVGFKPGDPLKRQWFALEQRQRNKVRGCRG</sequence>
<accession>F2T0M3</accession>
<keyword id="KW-0378">Hydrolase</keyword>
<keyword id="KW-0479">Metal-binding</keyword>
<keyword id="KW-1185">Reference proteome</keyword>
<keyword id="KW-0862">Zinc</keyword>
<gene>
    <name evidence="5" type="primary">nscB</name>
    <name type="ORF">TERG_08360</name>
</gene>
<comment type="function">
    <text evidence="1 2 7">Lactamase-like protein; part of the gene cluster that mediates the biosynthesis of neosartoricin B, a prenylated anthracenone that probably exhibits T-cell antiproliferative activity, suggestive of a physiological role as an immunosuppressive agent (PubMed:23758576). The non-reducing polyketide synthase nscA probably synthesizes and cyclizes the decaketide backbone (By similarity). The hydrolase nscB then mediates the product release through hydrolysis followed by spontaneous decarboxylation (By similarity). The prenyltransferase nscD catalyzes the addition of the dimethylallyl group to the aromatic C5 (By similarity). The FAD-dependent monooxygenase nscC is then responsible for the stereospecific hydroxylation at C2 (By similarity). Neosartoricin B can be converted into two additional compounds neosartoricins C and D (By similarity). Neosartoricin C is a spirocyclic compound that is cyclized through the attack of C3 hydroxyl on C14, followed by dehydration (By similarity). On the other hand, neosartoricin D is a further cyclized compound in which attack of C2 on C14 in neosartoricin C results in the formation of the acetal-containing dioxabicyclo-octanone ring (By similarity). Both of these compounds are novel and possibly represent related metabolites of the gene cluster (By similarity).</text>
</comment>
<comment type="cofactor">
    <cofactor evidence="3">
        <name>Zn(2+)</name>
        <dbReference type="ChEBI" id="CHEBI:29105"/>
    </cofactor>
    <text evidence="3">Binds 2 Zn(2+) ions per subunit.</text>
</comment>
<comment type="pathway">
    <text evidence="7">Secondary metabolite biosynthesis.</text>
</comment>
<comment type="similarity">
    <text evidence="6">Belongs to the metallo-beta-lactamase superfamily.</text>
</comment>
<name>NSCB_TRIRC</name>
<reference key="1">
    <citation type="journal article" date="2012" name="MBio">
        <title>Comparative genome analysis of Trichophyton rubrum and related dermatophytes reveals candidate genes involved in infection.</title>
        <authorList>
            <person name="Martinez D.A."/>
            <person name="Oliver B.G."/>
            <person name="Graeser Y."/>
            <person name="Goldberg J.M."/>
            <person name="Li W."/>
            <person name="Martinez-Rossi N.M."/>
            <person name="Monod M."/>
            <person name="Shelest E."/>
            <person name="Barton R.C."/>
            <person name="Birch E."/>
            <person name="Brakhage A.A."/>
            <person name="Chen Z."/>
            <person name="Gurr S.J."/>
            <person name="Heiman D."/>
            <person name="Heitman J."/>
            <person name="Kosti I."/>
            <person name="Rossi A."/>
            <person name="Saif S."/>
            <person name="Samalova M."/>
            <person name="Saunders C.W."/>
            <person name="Shea T."/>
            <person name="Summerbell R.C."/>
            <person name="Xu J."/>
            <person name="Young S."/>
            <person name="Zeng Q."/>
            <person name="Birren B.W."/>
            <person name="Cuomo C.A."/>
            <person name="White T.C."/>
        </authorList>
    </citation>
    <scope>NUCLEOTIDE SEQUENCE [LARGE SCALE GENOMIC DNA]</scope>
    <source>
        <strain>ATCC MYA-4607 / CBS 118892</strain>
    </source>
</reference>
<reference key="2">
    <citation type="journal article" date="2013" name="ACS Synth. Biol.">
        <title>Discovery of cryptic polyketide metabolites from dermatophytes using heterologous expression in Aspergillus nidulans.</title>
        <authorList>
            <person name="Yin W.B."/>
            <person name="Chooi Y.H."/>
            <person name="Smith A.R."/>
            <person name="Cacho R.A."/>
            <person name="Hu Y."/>
            <person name="White T.C."/>
            <person name="Tang Y."/>
        </authorList>
    </citation>
    <scope>FUNCTION</scope>
</reference>
<protein>
    <recommendedName>
        <fullName evidence="5">Lactamase-like protein nscB</fullName>
        <ecNumber evidence="7">3.1.-.-</ecNumber>
    </recommendedName>
    <alternativeName>
        <fullName evidence="5">Neosartoricin B biosynthesis protein B</fullName>
    </alternativeName>
</protein>
<proteinExistence type="inferred from homology"/>
<evidence type="ECO:0000250" key="1">
    <source>
        <dbReference type="UniProtKB" id="A1D8J2"/>
    </source>
</evidence>
<evidence type="ECO:0000250" key="2">
    <source>
        <dbReference type="UniProtKB" id="F2S702"/>
    </source>
</evidence>
<evidence type="ECO:0000250" key="3">
    <source>
        <dbReference type="UniProtKB" id="Q988B9"/>
    </source>
</evidence>
<evidence type="ECO:0000255" key="4"/>
<evidence type="ECO:0000303" key="5">
    <source>
    </source>
</evidence>
<evidence type="ECO:0000305" key="6"/>
<evidence type="ECO:0000305" key="7">
    <source>
    </source>
</evidence>
<feature type="chain" id="PRO_0000437904" description="Lactamase-like protein nscB">
    <location>
        <begin position="1"/>
        <end position="322"/>
    </location>
</feature>
<feature type="active site" description="Proton donor/acceptor" evidence="4">
    <location>
        <position position="101"/>
    </location>
</feature>
<feature type="binding site" evidence="3">
    <location>
        <position position="97"/>
    </location>
    <ligand>
        <name>Zn(2+)</name>
        <dbReference type="ChEBI" id="CHEBI:29105"/>
        <label>1</label>
        <note>catalytic</note>
    </ligand>
</feature>
<feature type="binding site" evidence="3">
    <location>
        <position position="99"/>
    </location>
    <ligand>
        <name>Zn(2+)</name>
        <dbReference type="ChEBI" id="CHEBI:29105"/>
        <label>1</label>
        <note>catalytic</note>
    </ligand>
</feature>
<feature type="binding site" evidence="3">
    <location>
        <position position="101"/>
    </location>
    <ligand>
        <name>Zn(2+)</name>
        <dbReference type="ChEBI" id="CHEBI:29105"/>
        <label>2</label>
        <note>catalytic</note>
    </ligand>
</feature>
<feature type="binding site" evidence="3">
    <location>
        <position position="102"/>
    </location>
    <ligand>
        <name>Zn(2+)</name>
        <dbReference type="ChEBI" id="CHEBI:29105"/>
        <label>2</label>
        <note>catalytic</note>
    </ligand>
</feature>
<dbReference type="EC" id="3.1.-.-" evidence="7"/>
<dbReference type="EMBL" id="GG700661">
    <property type="protein sequence ID" value="EGD92145.1"/>
    <property type="molecule type" value="Genomic_DNA"/>
</dbReference>
<dbReference type="RefSeq" id="XP_003231062.1">
    <property type="nucleotide sequence ID" value="XM_003231014.1"/>
</dbReference>
<dbReference type="SMR" id="F2T0M3"/>
<dbReference type="STRING" id="559305.F2T0M3"/>
<dbReference type="GeneID" id="10377338"/>
<dbReference type="eggNOG" id="KOG0813">
    <property type="taxonomic scope" value="Eukaryota"/>
</dbReference>
<dbReference type="HOGENOM" id="CLU_048478_1_0_1"/>
<dbReference type="InParanoid" id="F2T0M3"/>
<dbReference type="OMA" id="VDHMCFV"/>
<dbReference type="OrthoDB" id="17458at2759"/>
<dbReference type="Proteomes" id="UP000008864">
    <property type="component" value="Unassembled WGS sequence"/>
</dbReference>
<dbReference type="GO" id="GO:0008800">
    <property type="term" value="F:beta-lactamase activity"/>
    <property type="evidence" value="ECO:0007669"/>
    <property type="project" value="InterPro"/>
</dbReference>
<dbReference type="GO" id="GO:0008270">
    <property type="term" value="F:zinc ion binding"/>
    <property type="evidence" value="ECO:0007669"/>
    <property type="project" value="InterPro"/>
</dbReference>
<dbReference type="GO" id="GO:0017001">
    <property type="term" value="P:antibiotic catabolic process"/>
    <property type="evidence" value="ECO:0007669"/>
    <property type="project" value="InterPro"/>
</dbReference>
<dbReference type="GO" id="GO:0044550">
    <property type="term" value="P:secondary metabolite biosynthetic process"/>
    <property type="evidence" value="ECO:0007669"/>
    <property type="project" value="TreeGrafter"/>
</dbReference>
<dbReference type="CDD" id="cd07722">
    <property type="entry name" value="LACTB2-like_MBL-fold"/>
    <property type="match status" value="1"/>
</dbReference>
<dbReference type="FunFam" id="3.60.15.10:FF:000041">
    <property type="entry name" value="Metallo-beta-lactamase domain protein"/>
    <property type="match status" value="1"/>
</dbReference>
<dbReference type="Gene3D" id="3.60.15.10">
    <property type="entry name" value="Ribonuclease Z/Hydroxyacylglutathione hydrolase-like"/>
    <property type="match status" value="1"/>
</dbReference>
<dbReference type="Gene3D" id="1.10.10.10">
    <property type="entry name" value="Winged helix-like DNA-binding domain superfamily/Winged helix DNA-binding domain"/>
    <property type="match status" value="1"/>
</dbReference>
<dbReference type="InterPro" id="IPR001018">
    <property type="entry name" value="Beta-lactamase_class-B_CS"/>
</dbReference>
<dbReference type="InterPro" id="IPR047921">
    <property type="entry name" value="LACTB2-like_MBL-fold"/>
</dbReference>
<dbReference type="InterPro" id="IPR001279">
    <property type="entry name" value="Metallo-B-lactamas"/>
</dbReference>
<dbReference type="InterPro" id="IPR036866">
    <property type="entry name" value="RibonucZ/Hydroxyglut_hydro"/>
</dbReference>
<dbReference type="InterPro" id="IPR050662">
    <property type="entry name" value="Sec-metab_biosynth-thioest"/>
</dbReference>
<dbReference type="InterPro" id="IPR036388">
    <property type="entry name" value="WH-like_DNA-bd_sf"/>
</dbReference>
<dbReference type="PANTHER" id="PTHR23131">
    <property type="entry name" value="ENDORIBONUCLEASE LACTB2"/>
    <property type="match status" value="1"/>
</dbReference>
<dbReference type="PANTHER" id="PTHR23131:SF2">
    <property type="entry name" value="LACTAMASE-LIKE PROTEIN APTB-RELATED"/>
    <property type="match status" value="1"/>
</dbReference>
<dbReference type="Pfam" id="PF00753">
    <property type="entry name" value="Lactamase_B"/>
    <property type="match status" value="2"/>
</dbReference>
<dbReference type="SMART" id="SM00849">
    <property type="entry name" value="Lactamase_B"/>
    <property type="match status" value="1"/>
</dbReference>
<dbReference type="SUPFAM" id="SSF56281">
    <property type="entry name" value="Metallo-hydrolase/oxidoreductase"/>
    <property type="match status" value="1"/>
</dbReference>
<dbReference type="PROSITE" id="PS00743">
    <property type="entry name" value="BETA_LACTAMASE_B_1"/>
    <property type="match status" value="1"/>
</dbReference>
<organism>
    <name type="scientific">Trichophyton rubrum (strain ATCC MYA-4607 / CBS 118892)</name>
    <name type="common">Athlete's foot fungus</name>
    <dbReference type="NCBI Taxonomy" id="559305"/>
    <lineage>
        <taxon>Eukaryota</taxon>
        <taxon>Fungi</taxon>
        <taxon>Dikarya</taxon>
        <taxon>Ascomycota</taxon>
        <taxon>Pezizomycotina</taxon>
        <taxon>Eurotiomycetes</taxon>
        <taxon>Eurotiomycetidae</taxon>
        <taxon>Onygenales</taxon>
        <taxon>Arthrodermataceae</taxon>
        <taxon>Trichophyton</taxon>
    </lineage>
</organism>